<proteinExistence type="inferred from homology"/>
<accession>A9BPU8</accession>
<comment type="function">
    <text evidence="1">Produces ATP from ADP in the presence of a proton gradient across the membrane.</text>
</comment>
<comment type="subunit">
    <text evidence="1">F-type ATPases have 2 components, CF(1) - the catalytic core - and CF(0) - the membrane proton channel. CF(1) has five subunits: alpha(3), beta(3), gamma(1), delta(1), epsilon(1). CF(0) has three main subunits: a, b and c.</text>
</comment>
<comment type="subcellular location">
    <subcellularLocation>
        <location evidence="1">Cell inner membrane</location>
        <topology evidence="1">Peripheral membrane protein</topology>
    </subcellularLocation>
</comment>
<comment type="similarity">
    <text evidence="1">Belongs to the ATPase epsilon chain family.</text>
</comment>
<name>ATPE_DELAS</name>
<keyword id="KW-0066">ATP synthesis</keyword>
<keyword id="KW-0997">Cell inner membrane</keyword>
<keyword id="KW-1003">Cell membrane</keyword>
<keyword id="KW-0139">CF(1)</keyword>
<keyword id="KW-0375">Hydrogen ion transport</keyword>
<keyword id="KW-0406">Ion transport</keyword>
<keyword id="KW-0472">Membrane</keyword>
<keyword id="KW-1185">Reference proteome</keyword>
<keyword id="KW-0813">Transport</keyword>
<dbReference type="EMBL" id="CP000884">
    <property type="protein sequence ID" value="ABX33067.1"/>
    <property type="molecule type" value="Genomic_DNA"/>
</dbReference>
<dbReference type="RefSeq" id="WP_012202358.1">
    <property type="nucleotide sequence ID" value="NC_010002.1"/>
</dbReference>
<dbReference type="SMR" id="A9BPU8"/>
<dbReference type="STRING" id="398578.Daci_0421"/>
<dbReference type="KEGG" id="dac:Daci_0421"/>
<dbReference type="eggNOG" id="COG0355">
    <property type="taxonomic scope" value="Bacteria"/>
</dbReference>
<dbReference type="HOGENOM" id="CLU_084338_2_0_4"/>
<dbReference type="Proteomes" id="UP000000784">
    <property type="component" value="Chromosome"/>
</dbReference>
<dbReference type="GO" id="GO:0005886">
    <property type="term" value="C:plasma membrane"/>
    <property type="evidence" value="ECO:0007669"/>
    <property type="project" value="UniProtKB-SubCell"/>
</dbReference>
<dbReference type="GO" id="GO:0045259">
    <property type="term" value="C:proton-transporting ATP synthase complex"/>
    <property type="evidence" value="ECO:0007669"/>
    <property type="project" value="UniProtKB-KW"/>
</dbReference>
<dbReference type="GO" id="GO:0005524">
    <property type="term" value="F:ATP binding"/>
    <property type="evidence" value="ECO:0007669"/>
    <property type="project" value="UniProtKB-UniRule"/>
</dbReference>
<dbReference type="GO" id="GO:0046933">
    <property type="term" value="F:proton-transporting ATP synthase activity, rotational mechanism"/>
    <property type="evidence" value="ECO:0007669"/>
    <property type="project" value="UniProtKB-UniRule"/>
</dbReference>
<dbReference type="CDD" id="cd12152">
    <property type="entry name" value="F1-ATPase_delta"/>
    <property type="match status" value="1"/>
</dbReference>
<dbReference type="FunFam" id="2.60.15.10:FF:000001">
    <property type="entry name" value="ATP synthase epsilon chain"/>
    <property type="match status" value="1"/>
</dbReference>
<dbReference type="Gene3D" id="1.20.5.440">
    <property type="entry name" value="ATP synthase delta/epsilon subunit, C-terminal domain"/>
    <property type="match status" value="1"/>
</dbReference>
<dbReference type="Gene3D" id="2.60.15.10">
    <property type="entry name" value="F0F1 ATP synthase delta/epsilon subunit, N-terminal"/>
    <property type="match status" value="1"/>
</dbReference>
<dbReference type="HAMAP" id="MF_00530">
    <property type="entry name" value="ATP_synth_epsil_bac"/>
    <property type="match status" value="1"/>
</dbReference>
<dbReference type="InterPro" id="IPR036794">
    <property type="entry name" value="ATP_F1_dsu/esu_C_sf"/>
</dbReference>
<dbReference type="InterPro" id="IPR001469">
    <property type="entry name" value="ATP_synth_F1_dsu/esu"/>
</dbReference>
<dbReference type="InterPro" id="IPR020546">
    <property type="entry name" value="ATP_synth_F1_dsu/esu_N"/>
</dbReference>
<dbReference type="InterPro" id="IPR020547">
    <property type="entry name" value="ATP_synth_F1_esu_C"/>
</dbReference>
<dbReference type="InterPro" id="IPR036771">
    <property type="entry name" value="ATPsynth_dsu/esu_N"/>
</dbReference>
<dbReference type="NCBIfam" id="TIGR01216">
    <property type="entry name" value="ATP_synt_epsi"/>
    <property type="match status" value="1"/>
</dbReference>
<dbReference type="NCBIfam" id="NF001847">
    <property type="entry name" value="PRK00571.1-4"/>
    <property type="match status" value="1"/>
</dbReference>
<dbReference type="PANTHER" id="PTHR13822">
    <property type="entry name" value="ATP SYNTHASE DELTA/EPSILON CHAIN"/>
    <property type="match status" value="1"/>
</dbReference>
<dbReference type="PANTHER" id="PTHR13822:SF10">
    <property type="entry name" value="ATP SYNTHASE EPSILON CHAIN, CHLOROPLASTIC"/>
    <property type="match status" value="1"/>
</dbReference>
<dbReference type="Pfam" id="PF00401">
    <property type="entry name" value="ATP-synt_DE"/>
    <property type="match status" value="1"/>
</dbReference>
<dbReference type="Pfam" id="PF02823">
    <property type="entry name" value="ATP-synt_DE_N"/>
    <property type="match status" value="1"/>
</dbReference>
<dbReference type="SUPFAM" id="SSF46604">
    <property type="entry name" value="Epsilon subunit of F1F0-ATP synthase C-terminal domain"/>
    <property type="match status" value="1"/>
</dbReference>
<dbReference type="SUPFAM" id="SSF51344">
    <property type="entry name" value="Epsilon subunit of F1F0-ATP synthase N-terminal domain"/>
    <property type="match status" value="1"/>
</dbReference>
<feature type="chain" id="PRO_1000127846" description="ATP synthase epsilon chain">
    <location>
        <begin position="1"/>
        <end position="138"/>
    </location>
</feature>
<organism>
    <name type="scientific">Delftia acidovorans (strain DSM 14801 / SPH-1)</name>
    <dbReference type="NCBI Taxonomy" id="398578"/>
    <lineage>
        <taxon>Bacteria</taxon>
        <taxon>Pseudomonadati</taxon>
        <taxon>Pseudomonadota</taxon>
        <taxon>Betaproteobacteria</taxon>
        <taxon>Burkholderiales</taxon>
        <taxon>Comamonadaceae</taxon>
        <taxon>Delftia</taxon>
    </lineage>
</organism>
<gene>
    <name evidence="1" type="primary">atpC</name>
    <name type="ordered locus">Daci_0421</name>
</gene>
<protein>
    <recommendedName>
        <fullName evidence="1">ATP synthase epsilon chain</fullName>
    </recommendedName>
    <alternativeName>
        <fullName evidence="1">ATP synthase F1 sector epsilon subunit</fullName>
    </alternativeName>
    <alternativeName>
        <fullName evidence="1">F-ATPase epsilon subunit</fullName>
    </alternativeName>
</protein>
<reference key="1">
    <citation type="submission" date="2007-11" db="EMBL/GenBank/DDBJ databases">
        <title>Complete sequence of Delftia acidovorans DSM 14801 / SPH-1.</title>
        <authorList>
            <person name="Copeland A."/>
            <person name="Lucas S."/>
            <person name="Lapidus A."/>
            <person name="Barry K."/>
            <person name="Glavina del Rio T."/>
            <person name="Dalin E."/>
            <person name="Tice H."/>
            <person name="Pitluck S."/>
            <person name="Lowry S."/>
            <person name="Clum A."/>
            <person name="Schmutz J."/>
            <person name="Larimer F."/>
            <person name="Land M."/>
            <person name="Hauser L."/>
            <person name="Kyrpides N."/>
            <person name="Kim E."/>
            <person name="Schleheck D."/>
            <person name="Richardson P."/>
        </authorList>
    </citation>
    <scope>NUCLEOTIDE SEQUENCE [LARGE SCALE GENOMIC DNA]</scope>
    <source>
        <strain>DSM 14801 / SPH-1</strain>
    </source>
</reference>
<evidence type="ECO:0000255" key="1">
    <source>
        <dbReference type="HAMAP-Rule" id="MF_00530"/>
    </source>
</evidence>
<sequence>MNTIHVDVVSAEESIFSGEARFVALPGESGELGIFPRHTPLITRIKPGSVRIEMADGSEEFVFVAGGILEVQPNCVTVLSDTAIRGADLDAEKAEKAKLEAEEALKNAKSEVDLARAQSELAVMAAQIAALRKFRQKR</sequence>